<sequence>MSISASEARQRLFPLIEQVNTDHQPVRITSRAGDAVLMSADDYDAWQETVYLLRSPENARRLMEAVARDKAGHSAFTKSVDELREMAGGEE</sequence>
<feature type="chain" id="PRO_0000428613" description="Antitoxin RelJ">
    <location>
        <begin position="1"/>
        <end position="91"/>
    </location>
</feature>
<name>RELJ_MYCTO</name>
<accession>P9WF24</accession>
<accession>L0TCA7</accession>
<accession>O50386</accession>
<accession>P65067</accession>
<protein>
    <recommendedName>
        <fullName>Antitoxin RelJ</fullName>
    </recommendedName>
    <alternativeName>
        <fullName>Antitoxin YefM</fullName>
    </alternativeName>
</protein>
<proteinExistence type="inferred from homology"/>
<organism>
    <name type="scientific">Mycobacterium tuberculosis (strain CDC 1551 / Oshkosh)</name>
    <dbReference type="NCBI Taxonomy" id="83331"/>
    <lineage>
        <taxon>Bacteria</taxon>
        <taxon>Bacillati</taxon>
        <taxon>Actinomycetota</taxon>
        <taxon>Actinomycetes</taxon>
        <taxon>Mycobacteriales</taxon>
        <taxon>Mycobacteriaceae</taxon>
        <taxon>Mycobacterium</taxon>
        <taxon>Mycobacterium tuberculosis complex</taxon>
    </lineage>
</organism>
<comment type="function">
    <text evidence="1">Antitoxin component of a type II toxin-antitoxin (TA) system. A probable antitoxin for the putative mRNA interferase RelK (By similarity).</text>
</comment>
<comment type="subunit">
    <text evidence="1">Homodimer.</text>
</comment>
<comment type="similarity">
    <text evidence="2">Belongs to the phD/YefM antitoxin family.</text>
</comment>
<keyword id="KW-0238">DNA-binding</keyword>
<keyword id="KW-1185">Reference proteome</keyword>
<keyword id="KW-0678">Repressor</keyword>
<keyword id="KW-1277">Toxin-antitoxin system</keyword>
<keyword id="KW-0804">Transcription</keyword>
<keyword id="KW-0805">Transcription regulation</keyword>
<reference key="1">
    <citation type="journal article" date="2002" name="J. Bacteriol.">
        <title>Whole-genome comparison of Mycobacterium tuberculosis clinical and laboratory strains.</title>
        <authorList>
            <person name="Fleischmann R.D."/>
            <person name="Alland D."/>
            <person name="Eisen J.A."/>
            <person name="Carpenter L."/>
            <person name="White O."/>
            <person name="Peterson J.D."/>
            <person name="DeBoy R.T."/>
            <person name="Dodson R.J."/>
            <person name="Gwinn M.L."/>
            <person name="Haft D.H."/>
            <person name="Hickey E.K."/>
            <person name="Kolonay J.F."/>
            <person name="Nelson W.C."/>
            <person name="Umayam L.A."/>
            <person name="Ermolaeva M.D."/>
            <person name="Salzberg S.L."/>
            <person name="Delcher A."/>
            <person name="Utterback T.R."/>
            <person name="Weidman J.F."/>
            <person name="Khouri H.M."/>
            <person name="Gill J."/>
            <person name="Mikula A."/>
            <person name="Bishai W."/>
            <person name="Jacobs W.R. Jr."/>
            <person name="Venter J.C."/>
            <person name="Fraser C.M."/>
        </authorList>
    </citation>
    <scope>NUCLEOTIDE SEQUENCE [LARGE SCALE GENOMIC DNA]</scope>
    <source>
        <strain>CDC 1551 / Oshkosh</strain>
    </source>
</reference>
<evidence type="ECO:0000250" key="1"/>
<evidence type="ECO:0000305" key="2"/>
<dbReference type="EMBL" id="AE000516">
    <property type="protein sequence ID" value="AAK47804.1"/>
    <property type="molecule type" value="Genomic_DNA"/>
</dbReference>
<dbReference type="PIR" id="D70970">
    <property type="entry name" value="D70970"/>
</dbReference>
<dbReference type="RefSeq" id="WP_003417757.1">
    <property type="nucleotide sequence ID" value="NZ_KK341227.1"/>
</dbReference>
<dbReference type="SMR" id="P9WF24"/>
<dbReference type="GeneID" id="45427356"/>
<dbReference type="KEGG" id="mtc:MT3465"/>
<dbReference type="PATRIC" id="fig|83331.31.peg.3724"/>
<dbReference type="HOGENOM" id="CLU_155837_1_1_11"/>
<dbReference type="Proteomes" id="UP000001020">
    <property type="component" value="Chromosome"/>
</dbReference>
<dbReference type="GO" id="GO:0003677">
    <property type="term" value="F:DNA binding"/>
    <property type="evidence" value="ECO:0007669"/>
    <property type="project" value="UniProtKB-KW"/>
</dbReference>
<dbReference type="FunFam" id="3.40.1620.10:FF:000005">
    <property type="entry name" value="Antitoxin RelJ"/>
    <property type="match status" value="1"/>
</dbReference>
<dbReference type="Gene3D" id="1.10.1220.170">
    <property type="match status" value="1"/>
</dbReference>
<dbReference type="Gene3D" id="3.40.1620.10">
    <property type="entry name" value="YefM-like domain"/>
    <property type="match status" value="1"/>
</dbReference>
<dbReference type="InterPro" id="IPR006442">
    <property type="entry name" value="Antitoxin_Phd/YefM"/>
</dbReference>
<dbReference type="InterPro" id="IPR051405">
    <property type="entry name" value="phD/YefM_antitoxin"/>
</dbReference>
<dbReference type="InterPro" id="IPR036165">
    <property type="entry name" value="YefM-like_sf"/>
</dbReference>
<dbReference type="NCBIfam" id="TIGR01552">
    <property type="entry name" value="phd_fam"/>
    <property type="match status" value="1"/>
</dbReference>
<dbReference type="PANTHER" id="PTHR33713">
    <property type="entry name" value="ANTITOXIN YAFN-RELATED"/>
    <property type="match status" value="1"/>
</dbReference>
<dbReference type="PANTHER" id="PTHR33713:SF6">
    <property type="entry name" value="ANTITOXIN YEFM"/>
    <property type="match status" value="1"/>
</dbReference>
<dbReference type="Pfam" id="PF02604">
    <property type="entry name" value="PhdYeFM_antitox"/>
    <property type="match status" value="1"/>
</dbReference>
<dbReference type="SUPFAM" id="SSF143120">
    <property type="entry name" value="YefM-like"/>
    <property type="match status" value="1"/>
</dbReference>
<gene>
    <name type="primary">relJ</name>
    <name type="synonym">relB3</name>
    <name type="synonym">yefM</name>
    <name type="ordered locus">MT3465</name>
</gene>